<protein>
    <recommendedName>
        <fullName>Nucleolar protein 12</fullName>
    </recommendedName>
</protein>
<reference key="1">
    <citation type="submission" date="2006-09" db="EMBL/GenBank/DDBJ databases">
        <authorList>
            <consortium name="NIH - Xenopus Gene Collection (XGC) project"/>
        </authorList>
    </citation>
    <scope>NUCLEOTIDE SEQUENCE [LARGE SCALE MRNA]</scope>
    <source>
        <tissue>Ovary</tissue>
    </source>
</reference>
<name>NOL12_XENLA</name>
<feature type="chain" id="PRO_0000271212" description="Nucleolar protein 12">
    <location>
        <begin position="1"/>
        <end position="220"/>
    </location>
</feature>
<feature type="region of interest" description="Disordered" evidence="3">
    <location>
        <begin position="109"/>
        <end position="220"/>
    </location>
</feature>
<feature type="coiled-coil region" evidence="2">
    <location>
        <begin position="31"/>
        <end position="86"/>
    </location>
</feature>
<feature type="compositionally biased region" description="Basic and acidic residues" evidence="3">
    <location>
        <begin position="139"/>
        <end position="148"/>
    </location>
</feature>
<feature type="compositionally biased region" description="Basic residues" evidence="3">
    <location>
        <begin position="176"/>
        <end position="186"/>
    </location>
</feature>
<feature type="compositionally biased region" description="Basic residues" evidence="3">
    <location>
        <begin position="205"/>
        <end position="220"/>
    </location>
</feature>
<accession>Q0IH29</accession>
<gene>
    <name type="primary">nol12</name>
</gene>
<comment type="function">
    <text evidence="1">May bind to rRNA.</text>
</comment>
<comment type="subcellular location">
    <subcellularLocation>
        <location evidence="1">Nucleus</location>
        <location evidence="1">Nucleolus</location>
    </subcellularLocation>
</comment>
<comment type="similarity">
    <text evidence="4">Belongs to the RRP17 family.</text>
</comment>
<proteinExistence type="evidence at transcript level"/>
<sequence>MGKKKQKKGQGSRLEVIFDEEKRREYLTGFHKRKMQRRKTAVEEIKRKIKEEQKKMKEERHKEYMKMLKEREEALCELEENDELEEMVTSKTESVRYDHPNHTVTVTTISDLDLSGIRVPPLGNAEQKQEEEKVEEENEKGADEEKPKTSVSLPKKSGDPFLSKKICSLTASLHARSQRKSGKRPSRTNENKKQTSSKMSGRTSKTQRRKQTGKTRRRRN</sequence>
<keyword id="KW-0175">Coiled coil</keyword>
<keyword id="KW-0539">Nucleus</keyword>
<keyword id="KW-1185">Reference proteome</keyword>
<keyword id="KW-0694">RNA-binding</keyword>
<keyword id="KW-0699">rRNA-binding</keyword>
<dbReference type="EMBL" id="BC123345">
    <property type="protein sequence ID" value="AAI23346.1"/>
    <property type="molecule type" value="mRNA"/>
</dbReference>
<dbReference type="RefSeq" id="NP_001090400.1">
    <property type="nucleotide sequence ID" value="NM_001096931.1"/>
</dbReference>
<dbReference type="SMR" id="Q0IH29"/>
<dbReference type="DNASU" id="779312"/>
<dbReference type="GeneID" id="779312"/>
<dbReference type="KEGG" id="xla:779312"/>
<dbReference type="AGR" id="Xenbase:XB-GENE-1188371"/>
<dbReference type="CTD" id="779312"/>
<dbReference type="Xenbase" id="XB-GENE-1188371">
    <property type="gene designation" value="nol12.S"/>
</dbReference>
<dbReference type="OrthoDB" id="551633at2759"/>
<dbReference type="Proteomes" id="UP000186698">
    <property type="component" value="Chromosome 4S"/>
</dbReference>
<dbReference type="Bgee" id="779312">
    <property type="expression patterns" value="Expressed in blastula and 19 other cell types or tissues"/>
</dbReference>
<dbReference type="GO" id="GO:0005730">
    <property type="term" value="C:nucleolus"/>
    <property type="evidence" value="ECO:0000318"/>
    <property type="project" value="GO_Central"/>
</dbReference>
<dbReference type="GO" id="GO:0019843">
    <property type="term" value="F:rRNA binding"/>
    <property type="evidence" value="ECO:0000318"/>
    <property type="project" value="GO_Central"/>
</dbReference>
<dbReference type="InterPro" id="IPR019186">
    <property type="entry name" value="Nucleolar_protein_12"/>
</dbReference>
<dbReference type="PANTHER" id="PTHR14577">
    <property type="entry name" value="NUCLEOLAR PROTEIN 12"/>
    <property type="match status" value="1"/>
</dbReference>
<dbReference type="PANTHER" id="PTHR14577:SF0">
    <property type="entry name" value="NUCLEOLAR PROTEIN 12"/>
    <property type="match status" value="1"/>
</dbReference>
<dbReference type="Pfam" id="PF09805">
    <property type="entry name" value="Nop25"/>
    <property type="match status" value="1"/>
</dbReference>
<organism>
    <name type="scientific">Xenopus laevis</name>
    <name type="common">African clawed frog</name>
    <dbReference type="NCBI Taxonomy" id="8355"/>
    <lineage>
        <taxon>Eukaryota</taxon>
        <taxon>Metazoa</taxon>
        <taxon>Chordata</taxon>
        <taxon>Craniata</taxon>
        <taxon>Vertebrata</taxon>
        <taxon>Euteleostomi</taxon>
        <taxon>Amphibia</taxon>
        <taxon>Batrachia</taxon>
        <taxon>Anura</taxon>
        <taxon>Pipoidea</taxon>
        <taxon>Pipidae</taxon>
        <taxon>Xenopodinae</taxon>
        <taxon>Xenopus</taxon>
        <taxon>Xenopus</taxon>
    </lineage>
</organism>
<evidence type="ECO:0000250" key="1"/>
<evidence type="ECO:0000255" key="2"/>
<evidence type="ECO:0000256" key="3">
    <source>
        <dbReference type="SAM" id="MobiDB-lite"/>
    </source>
</evidence>
<evidence type="ECO:0000305" key="4"/>